<dbReference type="EC" id="3.1.1.-" evidence="7"/>
<dbReference type="EMBL" id="KR998253">
    <property type="protein sequence ID" value="AKR75010.1"/>
    <property type="molecule type" value="Genomic_DNA"/>
</dbReference>
<dbReference type="EMBL" id="CP033152">
    <property type="protein sequence ID" value="AYO43639.1"/>
    <property type="molecule type" value="Genomic_DNA"/>
</dbReference>
<dbReference type="SMR" id="A0A3G2S8R6"/>
<dbReference type="ESTHER" id="9basi-a0a0k0ver5">
    <property type="family name" value="Lipase_3"/>
</dbReference>
<dbReference type="VEuPathDB" id="FungiDB:DNF11_2689"/>
<dbReference type="VEuPathDB" id="FungiDB:MRET_3772"/>
<dbReference type="OrthoDB" id="460364at5204"/>
<dbReference type="Proteomes" id="UP000269793">
    <property type="component" value="Chromosome v"/>
</dbReference>
<dbReference type="GO" id="GO:0005576">
    <property type="term" value="C:extracellular region"/>
    <property type="evidence" value="ECO:0007669"/>
    <property type="project" value="UniProtKB-SubCell"/>
</dbReference>
<dbReference type="GO" id="GO:0120516">
    <property type="term" value="F:diacylglycerol lipase activity"/>
    <property type="evidence" value="ECO:0007669"/>
    <property type="project" value="RHEA"/>
</dbReference>
<dbReference type="GO" id="GO:0046872">
    <property type="term" value="F:metal ion binding"/>
    <property type="evidence" value="ECO:0007669"/>
    <property type="project" value="UniProtKB-KW"/>
</dbReference>
<dbReference type="GO" id="GO:0047372">
    <property type="term" value="F:monoacylglycerol lipase activity"/>
    <property type="evidence" value="ECO:0007669"/>
    <property type="project" value="RHEA"/>
</dbReference>
<dbReference type="GO" id="GO:0004806">
    <property type="term" value="F:triacylglycerol lipase activity"/>
    <property type="evidence" value="ECO:0007669"/>
    <property type="project" value="UniProtKB-EC"/>
</dbReference>
<dbReference type="GO" id="GO:0016042">
    <property type="term" value="P:lipid catabolic process"/>
    <property type="evidence" value="ECO:0007669"/>
    <property type="project" value="UniProtKB-KW"/>
</dbReference>
<dbReference type="CDD" id="cd00519">
    <property type="entry name" value="Lipase_3"/>
    <property type="match status" value="1"/>
</dbReference>
<dbReference type="Gene3D" id="3.40.50.1820">
    <property type="entry name" value="alpha/beta hydrolase"/>
    <property type="match status" value="1"/>
</dbReference>
<dbReference type="InterPro" id="IPR029058">
    <property type="entry name" value="AB_hydrolase_fold"/>
</dbReference>
<dbReference type="InterPro" id="IPR002921">
    <property type="entry name" value="Fungal_lipase-type"/>
</dbReference>
<dbReference type="InterPro" id="IPR051218">
    <property type="entry name" value="Sec_MonoDiacylglyc_Lipase"/>
</dbReference>
<dbReference type="PANTHER" id="PTHR45856">
    <property type="entry name" value="ALPHA/BETA-HYDROLASES SUPERFAMILY PROTEIN"/>
    <property type="match status" value="1"/>
</dbReference>
<dbReference type="PANTHER" id="PTHR45856:SF25">
    <property type="entry name" value="FUNGAL LIPASE-LIKE DOMAIN-CONTAINING PROTEIN"/>
    <property type="match status" value="1"/>
</dbReference>
<dbReference type="Pfam" id="PF01764">
    <property type="entry name" value="Lipase_3"/>
    <property type="match status" value="1"/>
</dbReference>
<dbReference type="SUPFAM" id="SSF53474">
    <property type="entry name" value="alpha/beta-Hydrolases"/>
    <property type="match status" value="1"/>
</dbReference>
<proteinExistence type="inferred from homology"/>
<protein>
    <recommendedName>
        <fullName evidence="4">Secreted mono- and diacylglycerol lipase LIP4</fullName>
        <ecNumber evidence="7">3.1.1.-</ecNumber>
    </recommendedName>
</protein>
<comment type="function">
    <text evidence="7">Secreted lipase involved in Dandruff and seborrheic dermatitis (D/SD) probably via lipase-mediated breakdown of sebaceous lipids and release of irritating free fatty acids (Probable). Shows activity against monoglyceride and diglyceride substrates (Probable). Due to an absence of fatty acid synthase genes in Malassezia species, secretory lipases are essential for the yeast to generate free fatty acids from degradation of sebum and assimilate them as lipid sources for growth (Probable). Plays an essential role at the pathogen-host interface during disease progression (Probable).</text>
</comment>
<comment type="catalytic activity">
    <reaction evidence="7">
        <text>a monoacylglycerol + H2O = glycerol + a fatty acid + H(+)</text>
        <dbReference type="Rhea" id="RHEA:15245"/>
        <dbReference type="ChEBI" id="CHEBI:15377"/>
        <dbReference type="ChEBI" id="CHEBI:15378"/>
        <dbReference type="ChEBI" id="CHEBI:17408"/>
        <dbReference type="ChEBI" id="CHEBI:17754"/>
        <dbReference type="ChEBI" id="CHEBI:28868"/>
    </reaction>
</comment>
<comment type="catalytic activity">
    <reaction evidence="7">
        <text>a diacylglycerol + H2O = a monoacylglycerol + a fatty acid + H(+)</text>
        <dbReference type="Rhea" id="RHEA:32731"/>
        <dbReference type="ChEBI" id="CHEBI:15377"/>
        <dbReference type="ChEBI" id="CHEBI:15378"/>
        <dbReference type="ChEBI" id="CHEBI:17408"/>
        <dbReference type="ChEBI" id="CHEBI:18035"/>
        <dbReference type="ChEBI" id="CHEBI:28868"/>
    </reaction>
</comment>
<comment type="subcellular location">
    <subcellularLocation>
        <location evidence="7">Secreted</location>
    </subcellularLocation>
</comment>
<comment type="similarity">
    <text evidence="6">Belongs to the AB hydrolase superfamily. Lipase family. Class 3 subfamily.</text>
</comment>
<name>LIP4_MALR7</name>
<feature type="signal peptide" evidence="2">
    <location>
        <begin position="1"/>
        <end position="16"/>
    </location>
</feature>
<feature type="chain" id="PRO_5018163553" description="Secreted mono- and diacylglycerol lipase LIP4">
    <location>
        <begin position="17"/>
        <end position="303"/>
    </location>
</feature>
<feature type="active site" description="Nucleophile" evidence="1 3">
    <location>
        <position position="167"/>
    </location>
</feature>
<feature type="active site" evidence="1">
    <location>
        <position position="224"/>
    </location>
</feature>
<feature type="disulfide bond" evidence="1">
    <location>
        <begin position="54"/>
        <end position="293"/>
    </location>
</feature>
<evidence type="ECO:0000250" key="1">
    <source>
        <dbReference type="UniProtKB" id="A8PUY1"/>
    </source>
</evidence>
<evidence type="ECO:0000255" key="2"/>
<evidence type="ECO:0000255" key="3">
    <source>
        <dbReference type="PROSITE-ProRule" id="PRU10037"/>
    </source>
</evidence>
<evidence type="ECO:0000303" key="4">
    <source>
    </source>
</evidence>
<evidence type="ECO:0000303" key="5">
    <source>
    </source>
</evidence>
<evidence type="ECO:0000305" key="6"/>
<evidence type="ECO:0000305" key="7">
    <source>
    </source>
</evidence>
<reference key="1">
    <citation type="journal article" date="2015" name="FEMS Yeast Res.">
        <title>Identification and characterization of lipases from Malassezia restricta, a causative agent of dandruff.</title>
        <authorList>
            <person name="Sommer B."/>
            <person name="Overy D.P."/>
            <person name="Kerr R.G."/>
        </authorList>
    </citation>
    <scope>NUCLEOTIDE SEQUENCE [GENOMIC DNA]</scope>
    <scope>FUNCTION</scope>
    <source>
        <strain>ATCC 96810 / NBRC 103918 / CBS 7877</strain>
    </source>
</reference>
<reference key="2">
    <citation type="journal article" date="2019" name="Microbiol. Resour. Announc.">
        <title>Complete Genome Sequence of Malassezia restricta CBS 7877, an Opportunist Pathogen Involved in Dandruff and Seborrheic Dermatitis.</title>
        <authorList>
            <person name="Morand S.C."/>
            <person name="Bertignac M."/>
            <person name="Iltis A."/>
            <person name="Kolder I.C.R.M."/>
            <person name="Pirovano W."/>
            <person name="Jourdain R."/>
            <person name="Clavaud C."/>
        </authorList>
    </citation>
    <scope>NUCLEOTIDE SEQUENCE [LARGE SCALE GENOMIC DNA]</scope>
    <source>
        <strain>ATCC 96810 / NBRC 103918 / CBS 7877</strain>
    </source>
</reference>
<gene>
    <name evidence="4" type="primary">LIP4</name>
    <name evidence="5" type="synonym">LIP_2</name>
    <name type="ORF">DNF11_2689</name>
</gene>
<organism>
    <name type="scientific">Malassezia restricta (strain ATCC 96810 / NBRC 103918 / CBS 7877)</name>
    <name type="common">Seborrheic dermatitis infection agent</name>
    <dbReference type="NCBI Taxonomy" id="425264"/>
    <lineage>
        <taxon>Eukaryota</taxon>
        <taxon>Fungi</taxon>
        <taxon>Dikarya</taxon>
        <taxon>Basidiomycota</taxon>
        <taxon>Ustilaginomycotina</taxon>
        <taxon>Malasseziomycetes</taxon>
        <taxon>Malasseziales</taxon>
        <taxon>Malasseziaceae</taxon>
        <taxon>Malassezia</taxon>
    </lineage>
</organism>
<keyword id="KW-1015">Disulfide bond</keyword>
<keyword id="KW-0378">Hydrolase</keyword>
<keyword id="KW-0442">Lipid degradation</keyword>
<keyword id="KW-0443">Lipid metabolism</keyword>
<keyword id="KW-0479">Metal-binding</keyword>
<keyword id="KW-1185">Reference proteome</keyword>
<keyword id="KW-0964">Secreted</keyword>
<keyword id="KW-0732">Signal</keyword>
<accession>A0A3G2S8R6</accession>
<accession>A0A0K0VER5</accession>
<sequence>MHFLAFLLCLIPLALCIIEPRDIDGPTSHEAPTDLPIDWHILSQAAGMAHEPYCLFGDIGDRVGDAEVLWSKGHGVVIQRVKIFHSKSLGVTVSFEGTTASLLSILHDVNAALIDPPKEVAPAYCEGVKLFAGFSNAYMELRDEVYEQIVKFQKQFNDKRVTTTGHSLGAAMAVLAAMDLNKRLDDGIYRSFAFGMPRTGNGAFANDVDKKIGGRFFYIVNGRDWVPRVLPRELGFQHPSGQIWINPPSTTHWKYYPGQENHYGANSEDPILTFEDYHGIYSHICLGYGPGKCPASVGTVYLP</sequence>